<dbReference type="EMBL" id="AP005291">
    <property type="protein sequence ID" value="BAD25793.1"/>
    <property type="status" value="ALT_SEQ"/>
    <property type="molecule type" value="Genomic_DNA"/>
</dbReference>
<dbReference type="EMBL" id="AP005306">
    <property type="protein sequence ID" value="BAD25802.1"/>
    <property type="status" value="ALT_SEQ"/>
    <property type="molecule type" value="Genomic_DNA"/>
</dbReference>
<dbReference type="EMBL" id="AP014958">
    <property type="protein sequence ID" value="BAS80014.1"/>
    <property type="status" value="ALT_SEQ"/>
    <property type="molecule type" value="Genomic_DNA"/>
</dbReference>
<dbReference type="EMBL" id="CM000139">
    <property type="protein sequence ID" value="EEE57467.1"/>
    <property type="status" value="ALT_SEQ"/>
    <property type="molecule type" value="Genomic_DNA"/>
</dbReference>
<dbReference type="SMR" id="Q6H647"/>
<dbReference type="STRING" id="39947.Q6H647"/>
<dbReference type="PaxDb" id="39947-Q6H647"/>
<dbReference type="HOGENOM" id="CLU_013407_1_0_1"/>
<dbReference type="InParanoid" id="Q6H647"/>
<dbReference type="Proteomes" id="UP000000763">
    <property type="component" value="Chromosome 2"/>
</dbReference>
<dbReference type="Proteomes" id="UP000007752">
    <property type="component" value="Chromosome 2"/>
</dbReference>
<dbReference type="Proteomes" id="UP000059680">
    <property type="component" value="Chromosome 2"/>
</dbReference>
<dbReference type="GO" id="GO:0005874">
    <property type="term" value="C:microtubule"/>
    <property type="evidence" value="ECO:0007669"/>
    <property type="project" value="UniProtKB-KW"/>
</dbReference>
<dbReference type="GO" id="GO:0005524">
    <property type="term" value="F:ATP binding"/>
    <property type="evidence" value="ECO:0007669"/>
    <property type="project" value="InterPro"/>
</dbReference>
<dbReference type="GO" id="GO:0008017">
    <property type="term" value="F:microtubule binding"/>
    <property type="evidence" value="ECO:0007669"/>
    <property type="project" value="InterPro"/>
</dbReference>
<dbReference type="GO" id="GO:0003777">
    <property type="term" value="F:microtubule motor activity"/>
    <property type="evidence" value="ECO:0007669"/>
    <property type="project" value="InterPro"/>
</dbReference>
<dbReference type="GO" id="GO:0007018">
    <property type="term" value="P:microtubule-based movement"/>
    <property type="evidence" value="ECO:0007669"/>
    <property type="project" value="InterPro"/>
</dbReference>
<dbReference type="FunFam" id="3.40.850.10:FF:000283">
    <property type="entry name" value="Putative inactive kinesin-like protein KIN-7B"/>
    <property type="match status" value="1"/>
</dbReference>
<dbReference type="Gene3D" id="3.40.850.10">
    <property type="entry name" value="Kinesin motor domain"/>
    <property type="match status" value="1"/>
</dbReference>
<dbReference type="InterPro" id="IPR027640">
    <property type="entry name" value="Kinesin-like_fam"/>
</dbReference>
<dbReference type="InterPro" id="IPR001752">
    <property type="entry name" value="Kinesin_motor_dom"/>
</dbReference>
<dbReference type="InterPro" id="IPR036961">
    <property type="entry name" value="Kinesin_motor_dom_sf"/>
</dbReference>
<dbReference type="InterPro" id="IPR021881">
    <property type="entry name" value="NACK_C"/>
</dbReference>
<dbReference type="InterPro" id="IPR027417">
    <property type="entry name" value="P-loop_NTPase"/>
</dbReference>
<dbReference type="PANTHER" id="PTHR47968">
    <property type="entry name" value="CENTROMERE PROTEIN E"/>
    <property type="match status" value="1"/>
</dbReference>
<dbReference type="PANTHER" id="PTHR47968:SF28">
    <property type="entry name" value="KINESIN-LIKE PROTEIN KIN-7C"/>
    <property type="match status" value="1"/>
</dbReference>
<dbReference type="Pfam" id="PF11995">
    <property type="entry name" value="DUF3490"/>
    <property type="match status" value="1"/>
</dbReference>
<dbReference type="Pfam" id="PF00225">
    <property type="entry name" value="Kinesin"/>
    <property type="match status" value="1"/>
</dbReference>
<dbReference type="PRINTS" id="PR00380">
    <property type="entry name" value="KINESINHEAVY"/>
</dbReference>
<dbReference type="SMART" id="SM00129">
    <property type="entry name" value="KISc"/>
    <property type="match status" value="1"/>
</dbReference>
<dbReference type="SUPFAM" id="SSF52540">
    <property type="entry name" value="P-loop containing nucleoside triphosphate hydrolases"/>
    <property type="match status" value="1"/>
</dbReference>
<dbReference type="PROSITE" id="PS50067">
    <property type="entry name" value="KINESIN_MOTOR_2"/>
    <property type="match status" value="1"/>
</dbReference>
<gene>
    <name evidence="5" type="primary">KIN7B</name>
    <name evidence="8" type="ordered locus">Os02g0644400</name>
    <name evidence="5" type="ordered locus">LOC_Os02g43050</name>
    <name evidence="6" type="ORF">OJ1282_H11.24</name>
    <name evidence="9" type="ORF">OsJ_07707</name>
    <name evidence="7" type="ORF">P0030D07.2</name>
</gene>
<evidence type="ECO:0000255" key="1"/>
<evidence type="ECO:0000255" key="2">
    <source>
        <dbReference type="PROSITE-ProRule" id="PRU00283"/>
    </source>
</evidence>
<evidence type="ECO:0000256" key="3">
    <source>
        <dbReference type="SAM" id="MobiDB-lite"/>
    </source>
</evidence>
<evidence type="ECO:0000303" key="4">
    <source>
    </source>
</evidence>
<evidence type="ECO:0000305" key="5"/>
<evidence type="ECO:0000312" key="6">
    <source>
        <dbReference type="EMBL" id="BAD25793.1"/>
    </source>
</evidence>
<evidence type="ECO:0000312" key="7">
    <source>
        <dbReference type="EMBL" id="BAD25802.1"/>
    </source>
</evidence>
<evidence type="ECO:0000312" key="8">
    <source>
        <dbReference type="EMBL" id="BAS80014.1"/>
    </source>
</evidence>
<evidence type="ECO:0000312" key="9">
    <source>
        <dbReference type="EMBL" id="EEE57467.1"/>
    </source>
</evidence>
<protein>
    <recommendedName>
        <fullName evidence="5">Putative inactive kinesin-like protein KIN-7B</fullName>
    </recommendedName>
</protein>
<comment type="similarity">
    <text evidence="4">Belongs to the TRAFAC class myosin-kinesin ATPase superfamily. Kinesin family. KIN-7 subfamily.</text>
</comment>
<comment type="caution">
    <text evidence="5">Could be the product of a pseudogene. The kinesin motor domain is truncated at the N-terminus and lacks the ATP-binding site which is one of the conserved features of the KIN7 family.</text>
</comment>
<comment type="sequence caution" evidence="5">
    <conflict type="erroneous gene model prediction">
        <sequence resource="EMBL-CDS" id="BAD25793"/>
    </conflict>
</comment>
<comment type="sequence caution" evidence="5">
    <conflict type="erroneous gene model prediction">
        <sequence resource="EMBL-CDS" id="BAD25802"/>
    </conflict>
</comment>
<comment type="sequence caution" evidence="5">
    <conflict type="erroneous gene model prediction">
        <sequence resource="EMBL-CDS" id="BAS80014"/>
    </conflict>
</comment>
<comment type="sequence caution" evidence="5">
    <conflict type="erroneous gene model prediction">
        <sequence resource="EMBL-CDS" id="EEE57467"/>
    </conflict>
</comment>
<feature type="chain" id="PRO_0000436623" description="Putative inactive kinesin-like protein KIN-7B">
    <location>
        <begin position="1"/>
        <end position="699"/>
    </location>
</feature>
<feature type="domain" description="Kinesin motor" evidence="2">
    <location>
        <begin position="1" status="less than"/>
        <end position="170"/>
    </location>
</feature>
<feature type="region of interest" description="Disordered" evidence="3">
    <location>
        <begin position="249"/>
        <end position="345"/>
    </location>
</feature>
<feature type="coiled-coil region" evidence="1">
    <location>
        <begin position="179"/>
        <end position="247"/>
    </location>
</feature>
<feature type="compositionally biased region" description="Low complexity" evidence="3">
    <location>
        <begin position="264"/>
        <end position="275"/>
    </location>
</feature>
<feature type="compositionally biased region" description="Basic and acidic residues" evidence="3">
    <location>
        <begin position="276"/>
        <end position="298"/>
    </location>
</feature>
<feature type="compositionally biased region" description="Polar residues" evidence="3">
    <location>
        <begin position="313"/>
        <end position="338"/>
    </location>
</feature>
<feature type="non-terminal residue">
    <location>
        <position position="1"/>
    </location>
</feature>
<sequence>MRAIQKKSLCHTSIISCWRRREYSIPPQANFGETFLNEKSSRSHQILRLTVESSAREFLGKDKSTTLVASANFVDLAGSERASQALSAGTRLKEGCHINRSLLALGTVIRKLSMGSNAHIPYRDSKLTRILQPSLGGNARTAIICTLSPATSHIEQSRNTLLFGSCAKEVVTNAQVNVVMSDKALVKHLQKELARLESELRHPVQSSSLETLLKEKDNQIRKMEKEIKELKSQRDLAQSRLQDLLQSVGDHDLNRQVQGKHSVRSPPSVGMPPSVSRDDSSQVSHDDSDLYKEVRCIESNRTGGNDQLDLSAGESSSPQDSNMNSGLHGNDSNASVNSRHSRPSGEAPITLEEHLENIRRPFVSLAKDLGSSTRNSSNLRVIGRSRSCRSLTGSTMFDDMEMDDCTPLNRSLVEFPGRPVESHRRGSALHYDAETDTLSRAGSMSSEISTFKDAKTNGSVACDTEFTGIGEFVAELKEMAQVHYQKQLGDQNANGKSIGLDPIEGVSQSPSRWPLEFEKKQQEIIELWQACSISLVHRTYFFLLFKGEAADSIYMEVELRRLSFLRDTYSRGSTPSNAIVGSLSTSPVASAKKLQREREMLARQMQKRLSTEEREHTYTKWGVSLDSKRRKLQVARRLWTETKDLEHVRESASLVAKLIGLQEPGQVLKEMFGLSFAPQQQPTRRRSSNGWRYGIPSFA</sequence>
<proteinExistence type="uncertain"/>
<name>KN7B_ORYSJ</name>
<accession>Q6H647</accession>
<accession>A0A0P0VM67</accession>
<accession>B9F1C5</accession>
<keyword id="KW-0175">Coiled coil</keyword>
<keyword id="KW-0493">Microtubule</keyword>
<keyword id="KW-0505">Motor protein</keyword>
<keyword id="KW-1185">Reference proteome</keyword>
<reference key="1">
    <citation type="journal article" date="2005" name="Nature">
        <title>The map-based sequence of the rice genome.</title>
        <authorList>
            <consortium name="International rice genome sequencing project (IRGSP)"/>
        </authorList>
    </citation>
    <scope>NUCLEOTIDE SEQUENCE [LARGE SCALE GENOMIC DNA]</scope>
    <source>
        <strain>cv. Nipponbare</strain>
    </source>
</reference>
<reference key="2">
    <citation type="journal article" date="2013" name="Rice">
        <title>Improvement of the Oryza sativa Nipponbare reference genome using next generation sequence and optical map data.</title>
        <authorList>
            <person name="Kawahara Y."/>
            <person name="de la Bastide M."/>
            <person name="Hamilton J.P."/>
            <person name="Kanamori H."/>
            <person name="McCombie W.R."/>
            <person name="Ouyang S."/>
            <person name="Schwartz D.C."/>
            <person name="Tanaka T."/>
            <person name="Wu J."/>
            <person name="Zhou S."/>
            <person name="Childs K.L."/>
            <person name="Davidson R.M."/>
            <person name="Lin H."/>
            <person name="Quesada-Ocampo L."/>
            <person name="Vaillancourt B."/>
            <person name="Sakai H."/>
            <person name="Lee S.S."/>
            <person name="Kim J."/>
            <person name="Numa H."/>
            <person name="Itoh T."/>
            <person name="Buell C.R."/>
            <person name="Matsumoto T."/>
        </authorList>
    </citation>
    <scope>GENOME REANNOTATION</scope>
    <source>
        <strain>cv. Nipponbare</strain>
    </source>
</reference>
<reference key="3">
    <citation type="journal article" date="2005" name="PLoS Biol.">
        <title>The genomes of Oryza sativa: a history of duplications.</title>
        <authorList>
            <person name="Yu J."/>
            <person name="Wang J."/>
            <person name="Lin W."/>
            <person name="Li S."/>
            <person name="Li H."/>
            <person name="Zhou J."/>
            <person name="Ni P."/>
            <person name="Dong W."/>
            <person name="Hu S."/>
            <person name="Zeng C."/>
            <person name="Zhang J."/>
            <person name="Zhang Y."/>
            <person name="Li R."/>
            <person name="Xu Z."/>
            <person name="Li S."/>
            <person name="Li X."/>
            <person name="Zheng H."/>
            <person name="Cong L."/>
            <person name="Lin L."/>
            <person name="Yin J."/>
            <person name="Geng J."/>
            <person name="Li G."/>
            <person name="Shi J."/>
            <person name="Liu J."/>
            <person name="Lv H."/>
            <person name="Li J."/>
            <person name="Wang J."/>
            <person name="Deng Y."/>
            <person name="Ran L."/>
            <person name="Shi X."/>
            <person name="Wang X."/>
            <person name="Wu Q."/>
            <person name="Li C."/>
            <person name="Ren X."/>
            <person name="Wang J."/>
            <person name="Wang X."/>
            <person name="Li D."/>
            <person name="Liu D."/>
            <person name="Zhang X."/>
            <person name="Ji Z."/>
            <person name="Zhao W."/>
            <person name="Sun Y."/>
            <person name="Zhang Z."/>
            <person name="Bao J."/>
            <person name="Han Y."/>
            <person name="Dong L."/>
            <person name="Ji J."/>
            <person name="Chen P."/>
            <person name="Wu S."/>
            <person name="Liu J."/>
            <person name="Xiao Y."/>
            <person name="Bu D."/>
            <person name="Tan J."/>
            <person name="Yang L."/>
            <person name="Ye C."/>
            <person name="Zhang J."/>
            <person name="Xu J."/>
            <person name="Zhou Y."/>
            <person name="Yu Y."/>
            <person name="Zhang B."/>
            <person name="Zhuang S."/>
            <person name="Wei H."/>
            <person name="Liu B."/>
            <person name="Lei M."/>
            <person name="Yu H."/>
            <person name="Li Y."/>
            <person name="Xu H."/>
            <person name="Wei S."/>
            <person name="He X."/>
            <person name="Fang L."/>
            <person name="Zhang Z."/>
            <person name="Zhang Y."/>
            <person name="Huang X."/>
            <person name="Su Z."/>
            <person name="Tong W."/>
            <person name="Li J."/>
            <person name="Tong Z."/>
            <person name="Li S."/>
            <person name="Ye J."/>
            <person name="Wang L."/>
            <person name="Fang L."/>
            <person name="Lei T."/>
            <person name="Chen C.-S."/>
            <person name="Chen H.-C."/>
            <person name="Xu Z."/>
            <person name="Li H."/>
            <person name="Huang H."/>
            <person name="Zhang F."/>
            <person name="Xu H."/>
            <person name="Li N."/>
            <person name="Zhao C."/>
            <person name="Li S."/>
            <person name="Dong L."/>
            <person name="Huang Y."/>
            <person name="Li L."/>
            <person name="Xi Y."/>
            <person name="Qi Q."/>
            <person name="Li W."/>
            <person name="Zhang B."/>
            <person name="Hu W."/>
            <person name="Zhang Y."/>
            <person name="Tian X."/>
            <person name="Jiao Y."/>
            <person name="Liang X."/>
            <person name="Jin J."/>
            <person name="Gao L."/>
            <person name="Zheng W."/>
            <person name="Hao B."/>
            <person name="Liu S.-M."/>
            <person name="Wang W."/>
            <person name="Yuan L."/>
            <person name="Cao M."/>
            <person name="McDermott J."/>
            <person name="Samudrala R."/>
            <person name="Wang J."/>
            <person name="Wong G.K.-S."/>
            <person name="Yang H."/>
        </authorList>
    </citation>
    <scope>NUCLEOTIDE SEQUENCE [LARGE SCALE GENOMIC DNA]</scope>
    <source>
        <strain>cv. Nipponbare</strain>
    </source>
</reference>
<reference key="4">
    <citation type="journal article" date="2009" name="Ann. Bot.">
        <title>Evaluating the microtubule cytoskeleton and its interacting proteins in monocots by mining the rice genome.</title>
        <authorList>
            <person name="Guo L."/>
            <person name="Ho C.M."/>
            <person name="Kong Z."/>
            <person name="Lee Y.R."/>
            <person name="Qian Q."/>
            <person name="Liu B."/>
        </authorList>
    </citation>
    <scope>GENE FAMILY</scope>
    <scope>NOMENCLATURE</scope>
</reference>
<organism>
    <name type="scientific">Oryza sativa subsp. japonica</name>
    <name type="common">Rice</name>
    <dbReference type="NCBI Taxonomy" id="39947"/>
    <lineage>
        <taxon>Eukaryota</taxon>
        <taxon>Viridiplantae</taxon>
        <taxon>Streptophyta</taxon>
        <taxon>Embryophyta</taxon>
        <taxon>Tracheophyta</taxon>
        <taxon>Spermatophyta</taxon>
        <taxon>Magnoliopsida</taxon>
        <taxon>Liliopsida</taxon>
        <taxon>Poales</taxon>
        <taxon>Poaceae</taxon>
        <taxon>BOP clade</taxon>
        <taxon>Oryzoideae</taxon>
        <taxon>Oryzeae</taxon>
        <taxon>Oryzinae</taxon>
        <taxon>Oryza</taxon>
        <taxon>Oryza sativa</taxon>
    </lineage>
</organism>